<dbReference type="EMBL" id="CP000911">
    <property type="protein sequence ID" value="ABY37502.1"/>
    <property type="molecule type" value="Genomic_DNA"/>
</dbReference>
<dbReference type="RefSeq" id="WP_002963545.1">
    <property type="nucleotide sequence ID" value="NC_010169.1"/>
</dbReference>
<dbReference type="SMR" id="B0CK72"/>
<dbReference type="KEGG" id="bmt:BSUIS_A0412"/>
<dbReference type="HOGENOM" id="CLU_079215_1_2_5"/>
<dbReference type="Proteomes" id="UP000008545">
    <property type="component" value="Chromosome I"/>
</dbReference>
<dbReference type="GO" id="GO:0005886">
    <property type="term" value="C:plasma membrane"/>
    <property type="evidence" value="ECO:0007669"/>
    <property type="project" value="UniProtKB-SubCell"/>
</dbReference>
<dbReference type="GO" id="GO:0045259">
    <property type="term" value="C:proton-transporting ATP synthase complex"/>
    <property type="evidence" value="ECO:0007669"/>
    <property type="project" value="UniProtKB-KW"/>
</dbReference>
<dbReference type="GO" id="GO:0046933">
    <property type="term" value="F:proton-transporting ATP synthase activity, rotational mechanism"/>
    <property type="evidence" value="ECO:0007669"/>
    <property type="project" value="UniProtKB-UniRule"/>
</dbReference>
<dbReference type="GO" id="GO:0046961">
    <property type="term" value="F:proton-transporting ATPase activity, rotational mechanism"/>
    <property type="evidence" value="ECO:0007669"/>
    <property type="project" value="TreeGrafter"/>
</dbReference>
<dbReference type="CDD" id="cd06503">
    <property type="entry name" value="ATP-synt_Fo_b"/>
    <property type="match status" value="1"/>
</dbReference>
<dbReference type="Gene3D" id="6.10.250.1580">
    <property type="match status" value="1"/>
</dbReference>
<dbReference type="HAMAP" id="MF_01398">
    <property type="entry name" value="ATP_synth_b_bprime"/>
    <property type="match status" value="1"/>
</dbReference>
<dbReference type="InterPro" id="IPR002146">
    <property type="entry name" value="ATP_synth_b/b'su_bac/chlpt"/>
</dbReference>
<dbReference type="InterPro" id="IPR050059">
    <property type="entry name" value="ATP_synthase_B_chain"/>
</dbReference>
<dbReference type="NCBIfam" id="NF006612">
    <property type="entry name" value="PRK09174.1"/>
    <property type="match status" value="1"/>
</dbReference>
<dbReference type="PANTHER" id="PTHR33445:SF1">
    <property type="entry name" value="ATP SYNTHASE SUBUNIT B"/>
    <property type="match status" value="1"/>
</dbReference>
<dbReference type="PANTHER" id="PTHR33445">
    <property type="entry name" value="ATP SYNTHASE SUBUNIT B', CHLOROPLASTIC"/>
    <property type="match status" value="1"/>
</dbReference>
<dbReference type="Pfam" id="PF00430">
    <property type="entry name" value="ATP-synt_B"/>
    <property type="match status" value="1"/>
</dbReference>
<organism>
    <name type="scientific">Brucella suis (strain ATCC 23445 / NCTC 10510)</name>
    <dbReference type="NCBI Taxonomy" id="470137"/>
    <lineage>
        <taxon>Bacteria</taxon>
        <taxon>Pseudomonadati</taxon>
        <taxon>Pseudomonadota</taxon>
        <taxon>Alphaproteobacteria</taxon>
        <taxon>Hyphomicrobiales</taxon>
        <taxon>Brucellaceae</taxon>
        <taxon>Brucella/Ochrobactrum group</taxon>
        <taxon>Brucella</taxon>
    </lineage>
</organism>
<sequence length="208" mass="21896">MFVSTAFAQTATESQPASTAGEHGAADAVHTETGVAHDAGHGSGVFPPFDSTHYASQVLWLAITFGLFYLFLSRVVLPRIGGVIETRRDRIAQDLEQAARLKQDADNAIAAYEQELAQARSKAASIAEAAREKGKGEADAERASAEAVLESKLKEAEERIAAIKAKAMSDVGNIAEETTATIVEQLLGLTADKASVSEAVKAIRASNA</sequence>
<gene>
    <name evidence="1" type="primary">atpF1</name>
    <name type="ordered locus">BSUIS_A0412</name>
</gene>
<name>ATPF1_BRUSI</name>
<evidence type="ECO:0000255" key="1">
    <source>
        <dbReference type="HAMAP-Rule" id="MF_01398"/>
    </source>
</evidence>
<evidence type="ECO:0000256" key="2">
    <source>
        <dbReference type="SAM" id="MobiDB-lite"/>
    </source>
</evidence>
<accession>B0CK72</accession>
<protein>
    <recommendedName>
        <fullName evidence="1">ATP synthase subunit b 1</fullName>
    </recommendedName>
    <alternativeName>
        <fullName evidence="1">ATP synthase F(0) sector subunit b 1</fullName>
    </alternativeName>
    <alternativeName>
        <fullName evidence="1">ATPase subunit I 1</fullName>
    </alternativeName>
    <alternativeName>
        <fullName evidence="1">F-type ATPase subunit b 1</fullName>
        <shortName evidence="1">F-ATPase subunit b 1</shortName>
    </alternativeName>
</protein>
<proteinExistence type="inferred from homology"/>
<reference key="1">
    <citation type="submission" date="2007-12" db="EMBL/GenBank/DDBJ databases">
        <title>Brucella suis ATCC 23445 whole genome shotgun sequencing project.</title>
        <authorList>
            <person name="Setubal J.C."/>
            <person name="Bowns C."/>
            <person name="Boyle S."/>
            <person name="Crasta O.R."/>
            <person name="Czar M.J."/>
            <person name="Dharmanolla C."/>
            <person name="Gillespie J.J."/>
            <person name="Kenyon R.W."/>
            <person name="Lu J."/>
            <person name="Mane S."/>
            <person name="Mohapatra S."/>
            <person name="Nagrani S."/>
            <person name="Purkayastha A."/>
            <person name="Rajasimha H.K."/>
            <person name="Shallom J.M."/>
            <person name="Shallom S."/>
            <person name="Shukla M."/>
            <person name="Snyder E.E."/>
            <person name="Sobral B.W."/>
            <person name="Wattam A.R."/>
            <person name="Will R."/>
            <person name="Williams K."/>
            <person name="Yoo H."/>
            <person name="Bruce D."/>
            <person name="Detter C."/>
            <person name="Munk C."/>
            <person name="Brettin T.S."/>
        </authorList>
    </citation>
    <scope>NUCLEOTIDE SEQUENCE [LARGE SCALE GENOMIC DNA]</scope>
    <source>
        <strain>ATCC 23445 / NCTC 10510</strain>
    </source>
</reference>
<keyword id="KW-0066">ATP synthesis</keyword>
<keyword id="KW-0997">Cell inner membrane</keyword>
<keyword id="KW-1003">Cell membrane</keyword>
<keyword id="KW-0138">CF(0)</keyword>
<keyword id="KW-0375">Hydrogen ion transport</keyword>
<keyword id="KW-0406">Ion transport</keyword>
<keyword id="KW-0472">Membrane</keyword>
<keyword id="KW-0812">Transmembrane</keyword>
<keyword id="KW-1133">Transmembrane helix</keyword>
<keyword id="KW-0813">Transport</keyword>
<comment type="function">
    <text evidence="1">F(1)F(0) ATP synthase produces ATP from ADP in the presence of a proton or sodium gradient. F-type ATPases consist of two structural domains, F(1) containing the extramembraneous catalytic core and F(0) containing the membrane proton channel, linked together by a central stalk and a peripheral stalk. During catalysis, ATP synthesis in the catalytic domain of F(1) is coupled via a rotary mechanism of the central stalk subunits to proton translocation.</text>
</comment>
<comment type="function">
    <text evidence="1">Component of the F(0) channel, it forms part of the peripheral stalk, linking F(1) to F(0).</text>
</comment>
<comment type="subunit">
    <text evidence="1">F-type ATPases have 2 components, F(1) - the catalytic core - and F(0) - the membrane proton channel. F(1) has five subunits: alpha(3), beta(3), gamma(1), delta(1), epsilon(1). F(0) has three main subunits: a(1), b(2) and c(10-14). The alpha and beta chains form an alternating ring which encloses part of the gamma chain. F(1) is attached to F(0) by a central stalk formed by the gamma and epsilon chains, while a peripheral stalk is formed by the delta and b chains.</text>
</comment>
<comment type="subcellular location">
    <subcellularLocation>
        <location evidence="1">Cell inner membrane</location>
        <topology evidence="1">Single-pass membrane protein</topology>
    </subcellularLocation>
</comment>
<comment type="similarity">
    <text evidence="1">Belongs to the ATPase B chain family.</text>
</comment>
<feature type="chain" id="PRO_0000368376" description="ATP synthase subunit b 1">
    <location>
        <begin position="1"/>
        <end position="208"/>
    </location>
</feature>
<feature type="transmembrane region" description="Helical" evidence="1">
    <location>
        <begin position="56"/>
        <end position="78"/>
    </location>
</feature>
<feature type="region of interest" description="Disordered" evidence="2">
    <location>
        <begin position="1"/>
        <end position="26"/>
    </location>
</feature>
<feature type="compositionally biased region" description="Polar residues" evidence="2">
    <location>
        <begin position="1"/>
        <end position="18"/>
    </location>
</feature>